<gene>
    <name evidence="1" type="primary">rpsR</name>
    <name type="ordered locus">XOO2415</name>
</gene>
<proteinExistence type="inferred from homology"/>
<reference key="1">
    <citation type="journal article" date="2005" name="Nucleic Acids Res.">
        <title>The genome sequence of Xanthomonas oryzae pathovar oryzae KACC10331, the bacterial blight pathogen of rice.</title>
        <authorList>
            <person name="Lee B.-M."/>
            <person name="Park Y.-J."/>
            <person name="Park D.-S."/>
            <person name="Kang H.-W."/>
            <person name="Kim J.-G."/>
            <person name="Song E.-S."/>
            <person name="Park I.-C."/>
            <person name="Yoon U.-H."/>
            <person name="Hahn J.-H."/>
            <person name="Koo B.-S."/>
            <person name="Lee G.-B."/>
            <person name="Kim H."/>
            <person name="Park H.-S."/>
            <person name="Yoon K.-O."/>
            <person name="Kim J.-H."/>
            <person name="Jung C.-H."/>
            <person name="Koh N.-H."/>
            <person name="Seo J.-S."/>
            <person name="Go S.-J."/>
        </authorList>
    </citation>
    <scope>NUCLEOTIDE SEQUENCE [LARGE SCALE GENOMIC DNA]</scope>
    <source>
        <strain>KACC10331 / KXO85</strain>
    </source>
</reference>
<name>RS18_XANOR</name>
<dbReference type="EMBL" id="AE013598">
    <property type="protein sequence ID" value="AAW75669.1"/>
    <property type="molecule type" value="Genomic_DNA"/>
</dbReference>
<dbReference type="SMR" id="Q5H052"/>
<dbReference type="STRING" id="291331.XOO2415"/>
<dbReference type="KEGG" id="xoo:XOO2415"/>
<dbReference type="HOGENOM" id="CLU_148710_2_3_6"/>
<dbReference type="Proteomes" id="UP000006735">
    <property type="component" value="Chromosome"/>
</dbReference>
<dbReference type="GO" id="GO:0022627">
    <property type="term" value="C:cytosolic small ribosomal subunit"/>
    <property type="evidence" value="ECO:0007669"/>
    <property type="project" value="TreeGrafter"/>
</dbReference>
<dbReference type="GO" id="GO:0070181">
    <property type="term" value="F:small ribosomal subunit rRNA binding"/>
    <property type="evidence" value="ECO:0007669"/>
    <property type="project" value="TreeGrafter"/>
</dbReference>
<dbReference type="GO" id="GO:0003735">
    <property type="term" value="F:structural constituent of ribosome"/>
    <property type="evidence" value="ECO:0007669"/>
    <property type="project" value="InterPro"/>
</dbReference>
<dbReference type="GO" id="GO:0006412">
    <property type="term" value="P:translation"/>
    <property type="evidence" value="ECO:0007669"/>
    <property type="project" value="UniProtKB-UniRule"/>
</dbReference>
<dbReference type="FunFam" id="4.10.640.10:FF:000001">
    <property type="entry name" value="30S ribosomal protein S18"/>
    <property type="match status" value="1"/>
</dbReference>
<dbReference type="Gene3D" id="4.10.640.10">
    <property type="entry name" value="Ribosomal protein S18"/>
    <property type="match status" value="1"/>
</dbReference>
<dbReference type="HAMAP" id="MF_00270">
    <property type="entry name" value="Ribosomal_bS18"/>
    <property type="match status" value="1"/>
</dbReference>
<dbReference type="InterPro" id="IPR001648">
    <property type="entry name" value="Ribosomal_bS18"/>
</dbReference>
<dbReference type="InterPro" id="IPR018275">
    <property type="entry name" value="Ribosomal_bS18_CS"/>
</dbReference>
<dbReference type="InterPro" id="IPR036870">
    <property type="entry name" value="Ribosomal_bS18_sf"/>
</dbReference>
<dbReference type="NCBIfam" id="TIGR00165">
    <property type="entry name" value="S18"/>
    <property type="match status" value="1"/>
</dbReference>
<dbReference type="PANTHER" id="PTHR13479">
    <property type="entry name" value="30S RIBOSOMAL PROTEIN S18"/>
    <property type="match status" value="1"/>
</dbReference>
<dbReference type="PANTHER" id="PTHR13479:SF40">
    <property type="entry name" value="SMALL RIBOSOMAL SUBUNIT PROTEIN BS18M"/>
    <property type="match status" value="1"/>
</dbReference>
<dbReference type="Pfam" id="PF01084">
    <property type="entry name" value="Ribosomal_S18"/>
    <property type="match status" value="1"/>
</dbReference>
<dbReference type="PRINTS" id="PR00974">
    <property type="entry name" value="RIBOSOMALS18"/>
</dbReference>
<dbReference type="SUPFAM" id="SSF46911">
    <property type="entry name" value="Ribosomal protein S18"/>
    <property type="match status" value="1"/>
</dbReference>
<dbReference type="PROSITE" id="PS00057">
    <property type="entry name" value="RIBOSOMAL_S18"/>
    <property type="match status" value="1"/>
</dbReference>
<organism>
    <name type="scientific">Xanthomonas oryzae pv. oryzae (strain KACC10331 / KXO85)</name>
    <dbReference type="NCBI Taxonomy" id="291331"/>
    <lineage>
        <taxon>Bacteria</taxon>
        <taxon>Pseudomonadati</taxon>
        <taxon>Pseudomonadota</taxon>
        <taxon>Gammaproteobacteria</taxon>
        <taxon>Lysobacterales</taxon>
        <taxon>Lysobacteraceae</taxon>
        <taxon>Xanthomonas</taxon>
    </lineage>
</organism>
<comment type="function">
    <text evidence="1">Binds as a heterodimer with protein bS6 to the central domain of the 16S rRNA, where it helps stabilize the platform of the 30S subunit.</text>
</comment>
<comment type="subunit">
    <text evidence="1">Part of the 30S ribosomal subunit. Forms a tight heterodimer with protein bS6.</text>
</comment>
<comment type="similarity">
    <text evidence="1">Belongs to the bacterial ribosomal protein bS18 family.</text>
</comment>
<keyword id="KW-1185">Reference proteome</keyword>
<keyword id="KW-0687">Ribonucleoprotein</keyword>
<keyword id="KW-0689">Ribosomal protein</keyword>
<keyword id="KW-0694">RNA-binding</keyword>
<keyword id="KW-0699">rRNA-binding</keyword>
<accession>Q5H052</accession>
<protein>
    <recommendedName>
        <fullName evidence="1">Small ribosomal subunit protein bS18</fullName>
    </recommendedName>
    <alternativeName>
        <fullName evidence="2">30S ribosomal protein S18</fullName>
    </alternativeName>
</protein>
<feature type="chain" id="PRO_1000003660" description="Small ribosomal subunit protein bS18">
    <location>
        <begin position="1"/>
        <end position="76"/>
    </location>
</feature>
<sequence>MSKFFRRRKFCKFTAEGVKEIDYKDLNTLRQYLTENGKIVPSRVTGTKSKYQRQLATAVKRSRFLALIPYTDNHDV</sequence>
<evidence type="ECO:0000255" key="1">
    <source>
        <dbReference type="HAMAP-Rule" id="MF_00270"/>
    </source>
</evidence>
<evidence type="ECO:0000305" key="2"/>